<accession>Q05BV3</accession>
<accession>B9EK59</accession>
<accession>Q5H9N6</accession>
<accession>Q6UYC9</accession>
<accession>Q6ZRP3</accession>
<accession>Q6ZT03</accession>
<proteinExistence type="evidence at protein level"/>
<name>EMAL5_HUMAN</name>
<dbReference type="EMBL" id="AK127024">
    <property type="protein sequence ID" value="BAC86793.1"/>
    <property type="status" value="ALT_SEQ"/>
    <property type="molecule type" value="mRNA"/>
</dbReference>
<dbReference type="EMBL" id="AK128086">
    <property type="protein sequence ID" value="BAC87266.1"/>
    <property type="status" value="ALT_SEQ"/>
    <property type="molecule type" value="mRNA"/>
</dbReference>
<dbReference type="EMBL" id="AL121768">
    <property type="status" value="NOT_ANNOTATED_CDS"/>
    <property type="molecule type" value="Genomic_DNA"/>
</dbReference>
<dbReference type="EMBL" id="AL162171">
    <property type="status" value="NOT_ANNOTATED_CDS"/>
    <property type="molecule type" value="Genomic_DNA"/>
</dbReference>
<dbReference type="EMBL" id="BC032685">
    <property type="protein sequence ID" value="AAH32685.1"/>
    <property type="status" value="ALT_SEQ"/>
    <property type="molecule type" value="mRNA"/>
</dbReference>
<dbReference type="EMBL" id="BC150639">
    <property type="protein sequence ID" value="AAI50640.1"/>
    <property type="molecule type" value="mRNA"/>
</dbReference>
<dbReference type="EMBL" id="AY357725">
    <property type="protein sequence ID" value="AAQ62653.1"/>
    <property type="molecule type" value="mRNA"/>
</dbReference>
<dbReference type="EMBL" id="CR933726">
    <property type="protein sequence ID" value="CAI46257.1"/>
    <property type="status" value="ALT_SEQ"/>
    <property type="molecule type" value="Transcribed_RNA"/>
</dbReference>
<dbReference type="CCDS" id="CCDS45148.1">
    <molecule id="Q05BV3-5"/>
</dbReference>
<dbReference type="CCDS" id="CCDS91916.1">
    <molecule id="Q05BV3-1"/>
</dbReference>
<dbReference type="RefSeq" id="NP_001397962.1">
    <molecule id="Q05BV3-1"/>
    <property type="nucleotide sequence ID" value="NM_001411033.1"/>
</dbReference>
<dbReference type="RefSeq" id="NP_899243.1">
    <molecule id="Q05BV3-5"/>
    <property type="nucleotide sequence ID" value="NM_183387.3"/>
</dbReference>
<dbReference type="RefSeq" id="XP_006720133.1">
    <property type="nucleotide sequence ID" value="XM_006720070.3"/>
</dbReference>
<dbReference type="SMR" id="Q05BV3"/>
<dbReference type="BioGRID" id="127791">
    <property type="interactions" value="18"/>
</dbReference>
<dbReference type="FunCoup" id="Q05BV3">
    <property type="interactions" value="167"/>
</dbReference>
<dbReference type="IntAct" id="Q05BV3">
    <property type="interactions" value="11"/>
</dbReference>
<dbReference type="STRING" id="9606.ENSP00000451998"/>
<dbReference type="GlyGen" id="Q05BV3">
    <property type="glycosylation" value="1 site, 1 O-linked glycan (1 site)"/>
</dbReference>
<dbReference type="iPTMnet" id="Q05BV3"/>
<dbReference type="PhosphoSitePlus" id="Q05BV3"/>
<dbReference type="BioMuta" id="EML5"/>
<dbReference type="DMDM" id="215274143"/>
<dbReference type="jPOST" id="Q05BV3"/>
<dbReference type="MassIVE" id="Q05BV3"/>
<dbReference type="PaxDb" id="9606-ENSP00000451998"/>
<dbReference type="PeptideAtlas" id="Q05BV3"/>
<dbReference type="ProteomicsDB" id="58380">
    <molecule id="Q05BV3-1"/>
</dbReference>
<dbReference type="ProteomicsDB" id="58381">
    <molecule id="Q05BV3-2"/>
</dbReference>
<dbReference type="ProteomicsDB" id="58382">
    <molecule id="Q05BV3-4"/>
</dbReference>
<dbReference type="ProteomicsDB" id="58383">
    <molecule id="Q05BV3-5"/>
</dbReference>
<dbReference type="Antibodypedia" id="47387">
    <property type="antibodies" value="36 antibodies from 16 providers"/>
</dbReference>
<dbReference type="DNASU" id="161436"/>
<dbReference type="Ensembl" id="ENST00000380664.9">
    <molecule id="Q05BV3-1"/>
    <property type="protein sequence ID" value="ENSP00000370039.5"/>
    <property type="gene ID" value="ENSG00000165521.16"/>
</dbReference>
<dbReference type="Ensembl" id="ENST00000554922.6">
    <molecule id="Q05BV3-5"/>
    <property type="protein sequence ID" value="ENSP00000451998.1"/>
    <property type="gene ID" value="ENSG00000165521.16"/>
</dbReference>
<dbReference type="GeneID" id="161436"/>
<dbReference type="KEGG" id="hsa:161436"/>
<dbReference type="MANE-Select" id="ENST00000554922.6">
    <molecule id="Q05BV3-5"/>
    <property type="protein sequence ID" value="ENSP00000451998.1"/>
    <property type="RefSeq nucleotide sequence ID" value="NM_183387.3"/>
    <property type="RefSeq protein sequence ID" value="NP_899243.1"/>
</dbReference>
<dbReference type="UCSC" id="uc059edd.1">
    <molecule id="Q05BV3-1"/>
    <property type="organism name" value="human"/>
</dbReference>
<dbReference type="AGR" id="HGNC:18197"/>
<dbReference type="CTD" id="161436"/>
<dbReference type="DisGeNET" id="161436"/>
<dbReference type="GeneCards" id="EML5"/>
<dbReference type="HGNC" id="HGNC:18197">
    <property type="gene designation" value="EML5"/>
</dbReference>
<dbReference type="HPA" id="ENSG00000165521">
    <property type="expression patterns" value="Tissue enhanced (brain, ovary, retina)"/>
</dbReference>
<dbReference type="MIM" id="618119">
    <property type="type" value="gene"/>
</dbReference>
<dbReference type="neXtProt" id="NX_Q05BV3"/>
<dbReference type="OpenTargets" id="ENSG00000165521"/>
<dbReference type="PharmGKB" id="PA134894613"/>
<dbReference type="VEuPathDB" id="HostDB:ENSG00000165521"/>
<dbReference type="eggNOG" id="KOG2106">
    <property type="taxonomic scope" value="Eukaryota"/>
</dbReference>
<dbReference type="GeneTree" id="ENSGT00940000156613"/>
<dbReference type="HOGENOM" id="CLU_001930_0_0_1"/>
<dbReference type="InParanoid" id="Q05BV3"/>
<dbReference type="OMA" id="AVAPCLE"/>
<dbReference type="OrthoDB" id="47802at2759"/>
<dbReference type="PAN-GO" id="Q05BV3">
    <property type="GO annotations" value="1 GO annotation based on evolutionary models"/>
</dbReference>
<dbReference type="PhylomeDB" id="Q05BV3"/>
<dbReference type="TreeFam" id="TF317832"/>
<dbReference type="PathwayCommons" id="Q05BV3"/>
<dbReference type="SignaLink" id="Q05BV3"/>
<dbReference type="BioGRID-ORCS" id="161436">
    <property type="hits" value="9 hits in 1151 CRISPR screens"/>
</dbReference>
<dbReference type="ChiTaRS" id="EML5">
    <property type="organism name" value="human"/>
</dbReference>
<dbReference type="GenomeRNAi" id="161436"/>
<dbReference type="Pharos" id="Q05BV3">
    <property type="development level" value="Tdark"/>
</dbReference>
<dbReference type="PRO" id="PR:Q05BV3"/>
<dbReference type="Proteomes" id="UP000005640">
    <property type="component" value="Chromosome 14"/>
</dbReference>
<dbReference type="RNAct" id="Q05BV3">
    <property type="molecule type" value="protein"/>
</dbReference>
<dbReference type="Bgee" id="ENSG00000165521">
    <property type="expression patterns" value="Expressed in male germ line stem cell (sensu Vertebrata) in testis and 107 other cell types or tissues"/>
</dbReference>
<dbReference type="ExpressionAtlas" id="Q05BV3">
    <property type="expression patterns" value="baseline and differential"/>
</dbReference>
<dbReference type="GO" id="GO:0005737">
    <property type="term" value="C:cytoplasm"/>
    <property type="evidence" value="ECO:0007669"/>
    <property type="project" value="UniProtKB-KW"/>
</dbReference>
<dbReference type="GO" id="GO:0070062">
    <property type="term" value="C:extracellular exosome"/>
    <property type="evidence" value="ECO:0007005"/>
    <property type="project" value="UniProtKB"/>
</dbReference>
<dbReference type="GO" id="GO:0005874">
    <property type="term" value="C:microtubule"/>
    <property type="evidence" value="ECO:0007669"/>
    <property type="project" value="UniProtKB-KW"/>
</dbReference>
<dbReference type="GO" id="GO:0008017">
    <property type="term" value="F:microtubule binding"/>
    <property type="evidence" value="ECO:0000318"/>
    <property type="project" value="GO_Central"/>
</dbReference>
<dbReference type="FunFam" id="2.130.10.10:FF:000040">
    <property type="entry name" value="echinoderm microtubule-associated protein-like 6 isoform X1"/>
    <property type="match status" value="1"/>
</dbReference>
<dbReference type="FunFam" id="2.130.10.10:FF:000042">
    <property type="entry name" value="echinoderm microtubule-associated protein-like 6 isoform X1"/>
    <property type="match status" value="1"/>
</dbReference>
<dbReference type="FunFam" id="2.130.10.10:FF:000044">
    <property type="entry name" value="echinoderm microtubule-associated protein-like 6 isoform X1"/>
    <property type="match status" value="1"/>
</dbReference>
<dbReference type="FunFam" id="2.130.10.10:FF:000024">
    <property type="entry name" value="Putative echinoderm microtubule-associated protein-like 6"/>
    <property type="match status" value="1"/>
</dbReference>
<dbReference type="FunFam" id="2.130.10.10:FF:000035">
    <property type="entry name" value="Putative echinoderm microtubule-associated protein-like 6"/>
    <property type="match status" value="1"/>
</dbReference>
<dbReference type="FunFam" id="2.130.10.10:FF:000037">
    <property type="entry name" value="Putative echinoderm microtubule-associated protein-like 6"/>
    <property type="match status" value="1"/>
</dbReference>
<dbReference type="Gene3D" id="2.130.10.10">
    <property type="entry name" value="YVTN repeat-like/Quinoprotein amine dehydrogenase"/>
    <property type="match status" value="6"/>
</dbReference>
<dbReference type="InterPro" id="IPR055442">
    <property type="entry name" value="Beta-prop_EML-like_2nd"/>
</dbReference>
<dbReference type="InterPro" id="IPR055439">
    <property type="entry name" value="Beta-prop_EML_1st"/>
</dbReference>
<dbReference type="InterPro" id="IPR005108">
    <property type="entry name" value="HELP"/>
</dbReference>
<dbReference type="InterPro" id="IPR011041">
    <property type="entry name" value="Quinoprot_gluc/sorb_DH_b-prop"/>
</dbReference>
<dbReference type="InterPro" id="IPR011047">
    <property type="entry name" value="Quinoprotein_ADH-like_sf"/>
</dbReference>
<dbReference type="InterPro" id="IPR015943">
    <property type="entry name" value="WD40/YVTN_repeat-like_dom_sf"/>
</dbReference>
<dbReference type="InterPro" id="IPR019775">
    <property type="entry name" value="WD40_repeat_CS"/>
</dbReference>
<dbReference type="InterPro" id="IPR036322">
    <property type="entry name" value="WD40_repeat_dom_sf"/>
</dbReference>
<dbReference type="InterPro" id="IPR001680">
    <property type="entry name" value="WD40_rpt"/>
</dbReference>
<dbReference type="InterPro" id="IPR050630">
    <property type="entry name" value="WD_repeat_EMAP"/>
</dbReference>
<dbReference type="PANTHER" id="PTHR13720:SF16">
    <property type="entry name" value="ECHINODERM MICROTUBULE-ASSOCIATED PROTEIN-LIKE 5"/>
    <property type="match status" value="1"/>
</dbReference>
<dbReference type="PANTHER" id="PTHR13720">
    <property type="entry name" value="WD-40 REPEAT PROTEIN"/>
    <property type="match status" value="1"/>
</dbReference>
<dbReference type="Pfam" id="PF23409">
    <property type="entry name" value="Beta-prop_EML"/>
    <property type="match status" value="3"/>
</dbReference>
<dbReference type="Pfam" id="PF23414">
    <property type="entry name" value="Beta-prop_EML_2"/>
    <property type="match status" value="3"/>
</dbReference>
<dbReference type="Pfam" id="PF03451">
    <property type="entry name" value="HELP"/>
    <property type="match status" value="3"/>
</dbReference>
<dbReference type="SMART" id="SM00320">
    <property type="entry name" value="WD40"/>
    <property type="match status" value="28"/>
</dbReference>
<dbReference type="SUPFAM" id="SSF50998">
    <property type="entry name" value="Quinoprotein alcohol dehydrogenase-like"/>
    <property type="match status" value="2"/>
</dbReference>
<dbReference type="SUPFAM" id="SSF50952">
    <property type="entry name" value="Soluble quinoprotein glucose dehydrogenase"/>
    <property type="match status" value="1"/>
</dbReference>
<dbReference type="SUPFAM" id="SSF50978">
    <property type="entry name" value="WD40 repeat-like"/>
    <property type="match status" value="3"/>
</dbReference>
<dbReference type="PROSITE" id="PS00678">
    <property type="entry name" value="WD_REPEATS_1"/>
    <property type="match status" value="1"/>
</dbReference>
<dbReference type="PROSITE" id="PS50082">
    <property type="entry name" value="WD_REPEATS_2"/>
    <property type="match status" value="5"/>
</dbReference>
<dbReference type="PROSITE" id="PS50294">
    <property type="entry name" value="WD_REPEATS_REGION"/>
    <property type="match status" value="4"/>
</dbReference>
<sequence>MAARSAPSCHLRLEWVYGYRGHQCRNNLYYTAAKEIVYFVAGVGVVYSPREHRQKFYRGHSDDIISLALHPERVLVATGQVGKEPYICIWDSYTVQTISVLKDVHTHGIACLAFDLDGQRLVSVGLDSKNAVCVWDWKRGKMLSMAPGHTDRIFDISWDLYQPNKLVSCGVKHIKFWSLCGNALTPKRGVFGKTGDLQTILCLACARDELTYSGALNGDIYVWKGINLIRTIQGAHAAGIFSMNACEEGFATGGRDGCIRLWDLTFKPITVIDLRETDQGYKGLSVRSVCWRGDHILVGTQDSEIFEIVVQERNKPFLIMQGHCEGELWALAVHPTKPLAVTGSDDRSVRIWSLVDHALIARCNMEEPIRCAAVNADGIHLALGMKDGSFTVLRVRDMTEVVHIKDRKEAIHELKYSPDGTYLAVGCNDSSVDIYGVAQRYKKVGECLGSLSFITHLDWSSDSRYLQTNDGNGKRLFYRMPGGKEVTSTEEIKGVHWASWTCVSGLEVNGIWPKYSDINDINSVDGNYIGQVLVTADDYGIIKLFRYPCLRKGAKFRKYIGHSAHVTNVRWSHDYQWVISIGGADHSVFQWKFIPERKLKDAVHIAPQESLADSHSDESDSDLSDVPELDSEIEQETQLTYRRQVYKEDLPQLKEQCKEKQKSATSKRRERAPGNSIRLHFVHGYRGYDCRSNLFYTQIGEIVYHVAAVGVIYNRQQNTQRFYLGHDDDILCLTIHPLKDYVATGQVGRDPSIHIWDTETIKPLSILKGHHQYGVSAVDFSADGKRLASVGIDDSHTVVLWDWKKGEKLSIARGSKDKIFVVKMNPYVPDKLITAGIKHMKFWRKAGGGLIGRKGYIGTLGKNDTMMCAVYGWTEEMAFSGTSTGDVCIWRDIFLVKTVKAHDGPVFSMHALEKGFVTGGKDGIVALWDDSFERCLKTYAIKRAALAPGSKGLLLEDNPSIRAISLGHGHILVGTKNGEILEVDKSGPITLLVQGHMEGEVWGLATHPYLPICATVSDDKTLRIWDLSPSHCMLAVRKLKKGGRCCCFSPDGKALAVGLNDGSFLMANADTLEDLVSFHHRKDMISDIRFSPGSGKYLAVASHDSFIDIYNVMSSKRVGICKGATSYITHIDWDIRGKLLQVNTGAKEQLFFEAPRGKKQTIPSVEVEKIAWASWTSVLGLCCEGIWPVIGEVTDVTASCLTSDKMVLATGDDLGFVKLFRYPTKGKFGKFKRYVAHSTHVTNVRWTYDDSMLVTLGGTDMSLMVWTNEMEGYREKRPCDSEESDIDSEEDGGYDSDVTRENEISYTIRALSTNIRPMLGIKPHLQQKEPSIDERPPVSRAPPQPEKLQTNNVGKKKRPIEDLVLELIFGYRGRDCRNNVHYLNDGDDIIYHTASVGILHNVATGSQSFYQEHNDDILCLTVNQHPKFINIVATGQVGDSADMSATAPSIHIWDAMNKQTLSILRCYHSKGVCSVSFSATGKLLLSVGLDPEHTITIWRWQEGAKIASRAGHNQRIFVAEFRPDSDTQFVSVGVKHVKFWTLAGRALLSKKGLLSTLEDARMQTMLAIAFGANNLTFTGTISGDVCVWKDHILCRIVARAHNGPVFAMYTTLRDGLIVTGGKERPSKEGGAVKLWDQELRRCRAFRLETGQATDCVRSVCRGKGKILVGTRNAEIIEVGEKNAACNILVNGHVDGPIWGLATHPSRDFFLSAAEDGTVRLWDIADKKMLNKVNLGHAARTVCYSPEGDMVAIGMKNGEFIILLVSSLKIWGKKRDRRCAIHDIRFSPDSRYLAVGSSENSVDFYDLTLGPTLNRISYCKDIPSFVIQMDFSADSSYLQVSSGCYKRHVYEVPSGKHLMDHAAIDRITWATWTSILGDEVLGIWSRHAEKADVNCACVSHSGISLVTGDDFGMVKLFDFPCPEKFAKHKRFLGHSPHVTNIRFTSGDRHVVSAGGDDCSLFVWKCVHTPH</sequence>
<reference key="1">
    <citation type="journal article" date="2003" name="Nature">
        <title>The DNA sequence and analysis of human chromosome 14.</title>
        <authorList>
            <person name="Heilig R."/>
            <person name="Eckenberg R."/>
            <person name="Petit J.-L."/>
            <person name="Fonknechten N."/>
            <person name="Da Silva C."/>
            <person name="Cattolico L."/>
            <person name="Levy M."/>
            <person name="Barbe V."/>
            <person name="De Berardinis V."/>
            <person name="Ureta-Vidal A."/>
            <person name="Pelletier E."/>
            <person name="Vico V."/>
            <person name="Anthouard V."/>
            <person name="Rowen L."/>
            <person name="Madan A."/>
            <person name="Qin S."/>
            <person name="Sun H."/>
            <person name="Du H."/>
            <person name="Pepin K."/>
            <person name="Artiguenave F."/>
            <person name="Robert C."/>
            <person name="Cruaud C."/>
            <person name="Bruels T."/>
            <person name="Jaillon O."/>
            <person name="Friedlander L."/>
            <person name="Samson G."/>
            <person name="Brottier P."/>
            <person name="Cure S."/>
            <person name="Segurens B."/>
            <person name="Aniere F."/>
            <person name="Samain S."/>
            <person name="Crespeau H."/>
            <person name="Abbasi N."/>
            <person name="Aiach N."/>
            <person name="Boscus D."/>
            <person name="Dickhoff R."/>
            <person name="Dors M."/>
            <person name="Dubois I."/>
            <person name="Friedman C."/>
            <person name="Gouyvenoux M."/>
            <person name="James R."/>
            <person name="Madan A."/>
            <person name="Mairey-Estrada B."/>
            <person name="Mangenot S."/>
            <person name="Martins N."/>
            <person name="Menard M."/>
            <person name="Oztas S."/>
            <person name="Ratcliffe A."/>
            <person name="Shaffer T."/>
            <person name="Trask B."/>
            <person name="Vacherie B."/>
            <person name="Bellemere C."/>
            <person name="Belser C."/>
            <person name="Besnard-Gonnet M."/>
            <person name="Bartol-Mavel D."/>
            <person name="Boutard M."/>
            <person name="Briez-Silla S."/>
            <person name="Combette S."/>
            <person name="Dufosse-Laurent V."/>
            <person name="Ferron C."/>
            <person name="Lechaplais C."/>
            <person name="Louesse C."/>
            <person name="Muselet D."/>
            <person name="Magdelenat G."/>
            <person name="Pateau E."/>
            <person name="Petit E."/>
            <person name="Sirvain-Trukniewicz P."/>
            <person name="Trybou A."/>
            <person name="Vega-Czarny N."/>
            <person name="Bataille E."/>
            <person name="Bluet E."/>
            <person name="Bordelais I."/>
            <person name="Dubois M."/>
            <person name="Dumont C."/>
            <person name="Guerin T."/>
            <person name="Haffray S."/>
            <person name="Hammadi R."/>
            <person name="Muanga J."/>
            <person name="Pellouin V."/>
            <person name="Robert D."/>
            <person name="Wunderle E."/>
            <person name="Gauguet G."/>
            <person name="Roy A."/>
            <person name="Sainte-Marthe L."/>
            <person name="Verdier J."/>
            <person name="Verdier-Discala C."/>
            <person name="Hillier L.W."/>
            <person name="Fulton L."/>
            <person name="McPherson J."/>
            <person name="Matsuda F."/>
            <person name="Wilson R."/>
            <person name="Scarpelli C."/>
            <person name="Gyapay G."/>
            <person name="Wincker P."/>
            <person name="Saurin W."/>
            <person name="Quetier F."/>
            <person name="Waterston R."/>
            <person name="Hood L."/>
            <person name="Weissenbach J."/>
        </authorList>
    </citation>
    <scope>NUCLEOTIDE SEQUENCE [LARGE SCALE GENOMIC DNA]</scope>
</reference>
<reference key="2">
    <citation type="journal article" date="2004" name="Genome Res.">
        <title>The status, quality, and expansion of the NIH full-length cDNA project: the Mammalian Gene Collection (MGC).</title>
        <authorList>
            <consortium name="The MGC Project Team"/>
        </authorList>
    </citation>
    <scope>NUCLEOTIDE SEQUENCE [LARGE SCALE MRNA] (ISOFORM 5)</scope>
    <scope>NUCLEOTIDE SEQUENCE [LARGE SCALE MRNA] OF 1-658 (ISOFORM 1)</scope>
    <source>
        <tissue>Brain</tissue>
        <tissue>Eye</tissue>
    </source>
</reference>
<reference key="3">
    <citation type="journal article" date="2004" name="Nat. Genet.">
        <title>Complete sequencing and characterization of 21,243 full-length human cDNAs.</title>
        <authorList>
            <person name="Ota T."/>
            <person name="Suzuki Y."/>
            <person name="Nishikawa T."/>
            <person name="Otsuki T."/>
            <person name="Sugiyama T."/>
            <person name="Irie R."/>
            <person name="Wakamatsu A."/>
            <person name="Hayashi K."/>
            <person name="Sato H."/>
            <person name="Nagai K."/>
            <person name="Kimura K."/>
            <person name="Makita H."/>
            <person name="Sekine M."/>
            <person name="Obayashi M."/>
            <person name="Nishi T."/>
            <person name="Shibahara T."/>
            <person name="Tanaka T."/>
            <person name="Ishii S."/>
            <person name="Yamamoto J."/>
            <person name="Saito K."/>
            <person name="Kawai Y."/>
            <person name="Isono Y."/>
            <person name="Nakamura Y."/>
            <person name="Nagahari K."/>
            <person name="Murakami K."/>
            <person name="Yasuda T."/>
            <person name="Iwayanagi T."/>
            <person name="Wagatsuma M."/>
            <person name="Shiratori A."/>
            <person name="Sudo H."/>
            <person name="Hosoiri T."/>
            <person name="Kaku Y."/>
            <person name="Kodaira H."/>
            <person name="Kondo H."/>
            <person name="Sugawara M."/>
            <person name="Takahashi M."/>
            <person name="Kanda K."/>
            <person name="Yokoi T."/>
            <person name="Furuya T."/>
            <person name="Kikkawa E."/>
            <person name="Omura Y."/>
            <person name="Abe K."/>
            <person name="Kamihara K."/>
            <person name="Katsuta N."/>
            <person name="Sato K."/>
            <person name="Tanikawa M."/>
            <person name="Yamazaki M."/>
            <person name="Ninomiya K."/>
            <person name="Ishibashi T."/>
            <person name="Yamashita H."/>
            <person name="Murakawa K."/>
            <person name="Fujimori K."/>
            <person name="Tanai H."/>
            <person name="Kimata M."/>
            <person name="Watanabe M."/>
            <person name="Hiraoka S."/>
            <person name="Chiba Y."/>
            <person name="Ishida S."/>
            <person name="Ono Y."/>
            <person name="Takiguchi S."/>
            <person name="Watanabe S."/>
            <person name="Yosida M."/>
            <person name="Hotuta T."/>
            <person name="Kusano J."/>
            <person name="Kanehori K."/>
            <person name="Takahashi-Fujii A."/>
            <person name="Hara H."/>
            <person name="Tanase T.-O."/>
            <person name="Nomura Y."/>
            <person name="Togiya S."/>
            <person name="Komai F."/>
            <person name="Hara R."/>
            <person name="Takeuchi K."/>
            <person name="Arita M."/>
            <person name="Imose N."/>
            <person name="Musashino K."/>
            <person name="Yuuki H."/>
            <person name="Oshima A."/>
            <person name="Sasaki N."/>
            <person name="Aotsuka S."/>
            <person name="Yoshikawa Y."/>
            <person name="Matsunawa H."/>
            <person name="Ichihara T."/>
            <person name="Shiohata N."/>
            <person name="Sano S."/>
            <person name="Moriya S."/>
            <person name="Momiyama H."/>
            <person name="Satoh N."/>
            <person name="Takami S."/>
            <person name="Terashima Y."/>
            <person name="Suzuki O."/>
            <person name="Nakagawa S."/>
            <person name="Senoh A."/>
            <person name="Mizoguchi H."/>
            <person name="Goto Y."/>
            <person name="Shimizu F."/>
            <person name="Wakebe H."/>
            <person name="Hishigaki H."/>
            <person name="Watanabe T."/>
            <person name="Sugiyama A."/>
            <person name="Takemoto M."/>
            <person name="Kawakami B."/>
            <person name="Yamazaki M."/>
            <person name="Watanabe K."/>
            <person name="Kumagai A."/>
            <person name="Itakura S."/>
            <person name="Fukuzumi Y."/>
            <person name="Fujimori Y."/>
            <person name="Komiyama M."/>
            <person name="Tashiro H."/>
            <person name="Tanigami A."/>
            <person name="Fujiwara T."/>
            <person name="Ono T."/>
            <person name="Yamada K."/>
            <person name="Fujii Y."/>
            <person name="Ozaki K."/>
            <person name="Hirao M."/>
            <person name="Ohmori Y."/>
            <person name="Kawabata A."/>
            <person name="Hikiji T."/>
            <person name="Kobatake N."/>
            <person name="Inagaki H."/>
            <person name="Ikema Y."/>
            <person name="Okamoto S."/>
            <person name="Okitani R."/>
            <person name="Kawakami T."/>
            <person name="Noguchi S."/>
            <person name="Itoh T."/>
            <person name="Shigeta K."/>
            <person name="Senba T."/>
            <person name="Matsumura K."/>
            <person name="Nakajima Y."/>
            <person name="Mizuno T."/>
            <person name="Morinaga M."/>
            <person name="Sasaki M."/>
            <person name="Togashi T."/>
            <person name="Oyama M."/>
            <person name="Hata H."/>
            <person name="Watanabe M."/>
            <person name="Komatsu T."/>
            <person name="Mizushima-Sugano J."/>
            <person name="Satoh T."/>
            <person name="Shirai Y."/>
            <person name="Takahashi Y."/>
            <person name="Nakagawa K."/>
            <person name="Okumura K."/>
            <person name="Nagase T."/>
            <person name="Nomura N."/>
            <person name="Kikuchi H."/>
            <person name="Masuho Y."/>
            <person name="Yamashita R."/>
            <person name="Nakai K."/>
            <person name="Yada T."/>
            <person name="Nakamura Y."/>
            <person name="Ohara O."/>
            <person name="Isogai T."/>
            <person name="Sugano S."/>
        </authorList>
    </citation>
    <scope>NUCLEOTIDE SEQUENCE [LARGE SCALE MRNA] OF 419-1969 (ISOFORM 4)</scope>
    <scope>NUCLEOTIDE SEQUENCE [LARGE SCALE MRNA] OF 1085-1969 (ISOFORM 2)</scope>
    <source>
        <tissue>Brain</tissue>
        <tissue>Testis</tissue>
    </source>
</reference>
<reference key="4">
    <citation type="submission" date="2003-07" db="EMBL/GenBank/DDBJ databases">
        <title>Partial coding sequence of a WD40 repeat containing protein from retina and brain.</title>
        <authorList>
            <person name="Bonner T.I."/>
        </authorList>
    </citation>
    <scope>NUCLEOTIDE SEQUENCE [MRNA] OF 502-1059 (ISOFORM 1)</scope>
    <source>
        <tissue>Retina</tissue>
    </source>
</reference>
<reference key="5">
    <citation type="journal article" date="2007" name="BMC Genomics">
        <title>The full-ORF clone resource of the German cDNA consortium.</title>
        <authorList>
            <person name="Bechtel S."/>
            <person name="Rosenfelder H."/>
            <person name="Duda A."/>
            <person name="Schmidt C.P."/>
            <person name="Ernst U."/>
            <person name="Wellenreuther R."/>
            <person name="Mehrle A."/>
            <person name="Schuster C."/>
            <person name="Bahr A."/>
            <person name="Bloecker H."/>
            <person name="Heubner D."/>
            <person name="Hoerlein A."/>
            <person name="Michel G."/>
            <person name="Wedler H."/>
            <person name="Koehrer K."/>
            <person name="Ottenwaelder B."/>
            <person name="Poustka A."/>
            <person name="Wiemann S."/>
            <person name="Schupp I."/>
        </authorList>
    </citation>
    <scope>NUCLEOTIDE SEQUENCE [LARGE SCALE MRNA] OF 1664-1969</scope>
    <source>
        <tissue>Testis</tissue>
    </source>
</reference>
<comment type="function">
    <text evidence="1">May modify the assembly dynamics of microtubules, such that microtubules are slightly longer, but more dynamic.</text>
</comment>
<comment type="subcellular location">
    <subcellularLocation>
        <location evidence="5">Cytoplasm</location>
        <location evidence="5">Cytoskeleton</location>
    </subcellularLocation>
</comment>
<comment type="alternative products">
    <event type="alternative splicing"/>
    <isoform>
        <id>Q05BV3-1</id>
        <name>1</name>
        <sequence type="displayed"/>
    </isoform>
    <isoform>
        <id>Q05BV3-2</id>
        <name>2</name>
        <sequence type="described" ref="VSP_041260 VSP_041261"/>
    </isoform>
    <isoform>
        <id>Q05BV3-4</id>
        <name>4</name>
        <sequence type="described" ref="VSP_041258 VSP_041259"/>
    </isoform>
    <isoform>
        <id>Q05BV3-5</id>
        <name>5</name>
        <sequence type="described" ref="VSP_040645"/>
    </isoform>
</comment>
<comment type="miscellaneous">
    <molecule>Isoform 2</molecule>
    <text evidence="5">May be produced at very low levels due to a premature stop codon in the mRNA, leading to nonsense-mediated mRNA decay.</text>
</comment>
<comment type="miscellaneous">
    <molecule>Isoform 4</molecule>
    <text evidence="5">May be produced at very low levels due to a premature stop codon in the mRNA, leading to nonsense-mediated mRNA decay.</text>
</comment>
<comment type="similarity">
    <text evidence="5">Belongs to the WD repeat EMAP family.</text>
</comment>
<comment type="sequence caution" evidence="5">
    <conflict type="miscellaneous discrepancy">
        <sequence resource="EMBL-CDS" id="AAH32685"/>
    </conflict>
    <text>Contaminating sequence. Potential poly-A sequence.</text>
</comment>
<comment type="sequence caution" evidence="5">
    <conflict type="erroneous translation">
        <sequence resource="EMBL-CDS" id="BAC86793"/>
    </conflict>
    <text>Wrong choice of CDS.</text>
</comment>
<comment type="sequence caution" evidence="5">
    <conflict type="erroneous translation">
        <sequence resource="EMBL-CDS" id="BAC87266"/>
    </conflict>
    <text>Wrong choice of CDS.</text>
</comment>
<comment type="sequence caution" evidence="5">
    <conflict type="miscellaneous discrepancy">
        <sequence resource="EMBL-CDS" id="CAI46257"/>
    </conflict>
    <text>The sequence differs from that shown in N-terminus because it seems to be derived from a pre-mRNA.</text>
</comment>
<feature type="chain" id="PRO_0000284395" description="Echinoderm microtubule-associated protein-like 5">
    <location>
        <begin position="1"/>
        <end position="1969"/>
    </location>
</feature>
<feature type="repeat" description="WD 1">
    <location>
        <begin position="59"/>
        <end position="100"/>
    </location>
</feature>
<feature type="repeat" description="WD 2">
    <location>
        <begin position="104"/>
        <end position="145"/>
    </location>
</feature>
<feature type="repeat" description="WD 3">
    <location>
        <begin position="148"/>
        <end position="187"/>
    </location>
</feature>
<feature type="repeat" description="WD 4">
    <location>
        <begin position="195"/>
        <end position="233"/>
    </location>
</feature>
<feature type="repeat" description="WD 5">
    <location>
        <begin position="235"/>
        <end position="273"/>
    </location>
</feature>
<feature type="repeat" description="WD 6">
    <location>
        <begin position="280"/>
        <end position="321"/>
    </location>
</feature>
<feature type="repeat" description="WD 7">
    <location>
        <begin position="323"/>
        <end position="362"/>
    </location>
</feature>
<feature type="repeat" description="WD 8">
    <location>
        <begin position="406"/>
        <end position="445"/>
    </location>
</feature>
<feature type="repeat" description="WD 9">
    <location>
        <begin position="449"/>
        <end position="488"/>
    </location>
</feature>
<feature type="repeat" description="WD 10">
    <location>
        <begin position="561"/>
        <end position="601"/>
    </location>
</feature>
<feature type="repeat" description="WD 11">
    <location>
        <begin position="725"/>
        <end position="766"/>
    </location>
</feature>
<feature type="repeat" description="WD 12">
    <location>
        <begin position="770"/>
        <end position="811"/>
    </location>
</feature>
<feature type="repeat" description="WD 13">
    <location>
        <begin position="814"/>
        <end position="853"/>
    </location>
</feature>
<feature type="repeat" description="WD 14">
    <location>
        <begin position="861"/>
        <end position="900"/>
    </location>
</feature>
<feature type="repeat" description="WD 15">
    <location>
        <begin position="901"/>
        <end position="940"/>
    </location>
</feature>
<feature type="repeat" description="WD 16">
    <location>
        <begin position="996"/>
        <end position="1035"/>
    </location>
</feature>
<feature type="repeat" description="WD 17">
    <location>
        <begin position="1038"/>
        <end position="1077"/>
    </location>
</feature>
<feature type="repeat" description="WD 18">
    <location>
        <begin position="1080"/>
        <end position="1120"/>
    </location>
</feature>
<feature type="repeat" description="WD 19">
    <location>
        <begin position="1236"/>
        <end position="1276"/>
    </location>
</feature>
<feature type="repeat" description="WD 20">
    <location>
        <begin position="1412"/>
        <end position="1463"/>
    </location>
</feature>
<feature type="repeat" description="WD 21">
    <location>
        <begin position="1467"/>
        <end position="1508"/>
    </location>
</feature>
<feature type="repeat" description="WD 22">
    <location>
        <begin position="1511"/>
        <end position="1550"/>
    </location>
</feature>
<feature type="repeat" description="WD 23">
    <location>
        <begin position="1560"/>
        <end position="1598"/>
    </location>
</feature>
<feature type="repeat" description="WD 24">
    <location>
        <begin position="1600"/>
        <end position="1646"/>
    </location>
</feature>
<feature type="repeat" description="WD 25">
    <location>
        <begin position="1691"/>
        <end position="1731"/>
    </location>
</feature>
<feature type="repeat" description="WD 26">
    <location>
        <begin position="1733"/>
        <end position="1774"/>
    </location>
</feature>
<feature type="repeat" description="WD 27">
    <location>
        <begin position="1775"/>
        <end position="1814"/>
    </location>
</feature>
<feature type="repeat" description="WD 28">
    <location>
        <begin position="1887"/>
        <end position="1926"/>
    </location>
</feature>
<feature type="repeat" description="WD 29">
    <location>
        <begin position="1932"/>
        <end position="1969"/>
    </location>
</feature>
<feature type="region of interest" description="Disordered" evidence="2">
    <location>
        <begin position="609"/>
        <end position="633"/>
    </location>
</feature>
<feature type="region of interest" description="Disordered" evidence="2">
    <location>
        <begin position="1274"/>
        <end position="1297"/>
    </location>
</feature>
<feature type="region of interest" description="Disordered" evidence="2">
    <location>
        <begin position="1326"/>
        <end position="1355"/>
    </location>
</feature>
<feature type="compositionally biased region" description="Acidic residues" evidence="2">
    <location>
        <begin position="619"/>
        <end position="633"/>
    </location>
</feature>
<feature type="compositionally biased region" description="Acidic residues" evidence="2">
    <location>
        <begin position="1281"/>
        <end position="1294"/>
    </location>
</feature>
<feature type="compositionally biased region" description="Basic and acidic residues" evidence="2">
    <location>
        <begin position="1326"/>
        <end position="1337"/>
    </location>
</feature>
<feature type="splice variant" id="VSP_041258" description="In isoform 4." evidence="3">
    <original>ESLADSHSDESDSD</original>
    <variation>GYIHLYLHRHLNLM</variation>
    <location>
        <begin position="609"/>
        <end position="622"/>
    </location>
</feature>
<feature type="splice variant" id="VSP_041259" description="In isoform 4." evidence="3">
    <location>
        <begin position="623"/>
        <end position="1969"/>
    </location>
</feature>
<feature type="splice variant" id="VSP_041260" description="In isoform 2." evidence="3">
    <original>GKLLQVNT</original>
    <variation>AFTGQHWC</variation>
    <location>
        <begin position="1137"/>
        <end position="1144"/>
    </location>
</feature>
<feature type="splice variant" id="VSP_041261" description="In isoform 2." evidence="3">
    <location>
        <begin position="1145"/>
        <end position="1969"/>
    </location>
</feature>
<feature type="splice variant" id="VSP_040645" description="In isoform 5." evidence="4">
    <original>E</original>
    <variation>ERQGVVRGS</variation>
    <location>
        <position position="1334"/>
    </location>
</feature>
<feature type="sequence variant" id="VAR_031730" description="In dbSNP:rs17188228.">
    <original>I</original>
    <variation>V</variation>
    <location>
        <position position="269"/>
    </location>
</feature>
<feature type="sequence conflict" description="In Ref. 2; AAH32685." evidence="5" ref="2">
    <original>F</original>
    <variation>S</variation>
    <location>
        <position position="317"/>
    </location>
</feature>
<feature type="sequence conflict" description="In Ref. 3; BAC86793." evidence="5" ref="3">
    <original>V</original>
    <variation>A</variation>
    <location>
        <position position="1402"/>
    </location>
</feature>
<feature type="sequence conflict" description="In Ref. 2; AAI50640." evidence="5" ref="2">
    <original>Y</original>
    <variation>C</variation>
    <location>
        <position position="1804"/>
    </location>
</feature>
<feature type="sequence conflict" description="In Ref. 2; AAI50640." evidence="5" ref="2">
    <original>R</original>
    <variation>G</variation>
    <location>
        <position position="1814"/>
    </location>
</feature>
<feature type="sequence conflict" description="In Ref. 2; AAI50640." evidence="5" ref="2">
    <original>S</original>
    <variation>G</variation>
    <location>
        <position position="1823"/>
    </location>
</feature>
<feature type="sequence conflict" description="In Ref. 2; AAI50640." evidence="5" ref="2">
    <original>Q</original>
    <variation>R</variation>
    <location>
        <position position="1827"/>
    </location>
</feature>
<feature type="sequence conflict" description="In Ref. 2; AAI50640." evidence="5" ref="2">
    <original>K</original>
    <variation>R</variation>
    <location>
        <position position="1928"/>
    </location>
</feature>
<feature type="sequence conflict" description="In Ref. 2; AAI50640." evidence="5" ref="2">
    <original>I</original>
    <variation>V</variation>
    <location>
        <position position="1940"/>
    </location>
</feature>
<feature type="sequence conflict" description="In Ref. 2; AAI50640." evidence="5" ref="2">
    <original>K</original>
    <variation>R</variation>
    <location>
        <position position="1963"/>
    </location>
</feature>
<feature type="sequence conflict" description="In Ref. 2; AAI50640." evidence="5" ref="2">
    <original>T</original>
    <variation>A</variation>
    <location>
        <position position="1967"/>
    </location>
</feature>
<protein>
    <recommendedName>
        <fullName>Echinoderm microtubule-associated protein-like 5</fullName>
        <shortName>EMAP-5</shortName>
    </recommendedName>
</protein>
<organism>
    <name type="scientific">Homo sapiens</name>
    <name type="common">Human</name>
    <dbReference type="NCBI Taxonomy" id="9606"/>
    <lineage>
        <taxon>Eukaryota</taxon>
        <taxon>Metazoa</taxon>
        <taxon>Chordata</taxon>
        <taxon>Craniata</taxon>
        <taxon>Vertebrata</taxon>
        <taxon>Euteleostomi</taxon>
        <taxon>Mammalia</taxon>
        <taxon>Eutheria</taxon>
        <taxon>Euarchontoglires</taxon>
        <taxon>Primates</taxon>
        <taxon>Haplorrhini</taxon>
        <taxon>Catarrhini</taxon>
        <taxon>Hominidae</taxon>
        <taxon>Homo</taxon>
    </lineage>
</organism>
<keyword id="KW-0025">Alternative splicing</keyword>
<keyword id="KW-0963">Cytoplasm</keyword>
<keyword id="KW-0206">Cytoskeleton</keyword>
<keyword id="KW-0493">Microtubule</keyword>
<keyword id="KW-1267">Proteomics identification</keyword>
<keyword id="KW-1185">Reference proteome</keyword>
<keyword id="KW-0677">Repeat</keyword>
<keyword id="KW-0853">WD repeat</keyword>
<gene>
    <name type="primary">EML5</name>
</gene>
<evidence type="ECO:0000250" key="1"/>
<evidence type="ECO:0000256" key="2">
    <source>
        <dbReference type="SAM" id="MobiDB-lite"/>
    </source>
</evidence>
<evidence type="ECO:0000303" key="3">
    <source>
    </source>
</evidence>
<evidence type="ECO:0000303" key="4">
    <source>
    </source>
</evidence>
<evidence type="ECO:0000305" key="5"/>